<keyword id="KW-0067">ATP-binding</keyword>
<keyword id="KW-0963">Cytoplasm</keyword>
<keyword id="KW-0418">Kinase</keyword>
<keyword id="KW-0547">Nucleotide-binding</keyword>
<keyword id="KW-0808">Transferase</keyword>
<feature type="chain" id="PRO_1000078335" description="Cytidylate kinase">
    <location>
        <begin position="1"/>
        <end position="216"/>
    </location>
</feature>
<feature type="binding site" evidence="1">
    <location>
        <begin position="9"/>
        <end position="17"/>
    </location>
    <ligand>
        <name>ATP</name>
        <dbReference type="ChEBI" id="CHEBI:30616"/>
    </ligand>
</feature>
<sequence>MAFIIAVDGPAASGKGTVASRLAKLYDYPMLDTGLLYRAVGVRLLDADGDPDDPVAAEVSARELDISELERPEVRTRAAGEAASRVAVHPGVRAALFDLQRDFALREPGCVIDGRDIGTVIAPEAPAKLYVSASPEVRADRRWKQLLGQGESVTLDEVLADIRKRDERDGGRASAPMTQAPDAVLLDTSEMTIEQAFDAARRIVETARARWGNPKG</sequence>
<proteinExistence type="inferred from homology"/>
<dbReference type="EC" id="2.7.4.25" evidence="1"/>
<dbReference type="EMBL" id="CP000927">
    <property type="protein sequence ID" value="ABZ69240.1"/>
    <property type="molecule type" value="Genomic_DNA"/>
</dbReference>
<dbReference type="SMR" id="B0T271"/>
<dbReference type="STRING" id="366602.Caul_0102"/>
<dbReference type="KEGG" id="cak:Caul_0102"/>
<dbReference type="eggNOG" id="COG0283">
    <property type="taxonomic scope" value="Bacteria"/>
</dbReference>
<dbReference type="HOGENOM" id="CLU_079959_0_1_5"/>
<dbReference type="OrthoDB" id="9807434at2"/>
<dbReference type="GO" id="GO:0005737">
    <property type="term" value="C:cytoplasm"/>
    <property type="evidence" value="ECO:0007669"/>
    <property type="project" value="UniProtKB-SubCell"/>
</dbReference>
<dbReference type="GO" id="GO:0005524">
    <property type="term" value="F:ATP binding"/>
    <property type="evidence" value="ECO:0007669"/>
    <property type="project" value="UniProtKB-UniRule"/>
</dbReference>
<dbReference type="GO" id="GO:0036430">
    <property type="term" value="F:CMP kinase activity"/>
    <property type="evidence" value="ECO:0007669"/>
    <property type="project" value="RHEA"/>
</dbReference>
<dbReference type="GO" id="GO:0036431">
    <property type="term" value="F:dCMP kinase activity"/>
    <property type="evidence" value="ECO:0007669"/>
    <property type="project" value="RHEA"/>
</dbReference>
<dbReference type="GO" id="GO:0006220">
    <property type="term" value="P:pyrimidine nucleotide metabolic process"/>
    <property type="evidence" value="ECO:0007669"/>
    <property type="project" value="UniProtKB-UniRule"/>
</dbReference>
<dbReference type="CDD" id="cd02020">
    <property type="entry name" value="CMPK"/>
    <property type="match status" value="1"/>
</dbReference>
<dbReference type="Gene3D" id="3.40.50.300">
    <property type="entry name" value="P-loop containing nucleotide triphosphate hydrolases"/>
    <property type="match status" value="1"/>
</dbReference>
<dbReference type="HAMAP" id="MF_00238">
    <property type="entry name" value="Cytidyl_kinase_type1"/>
    <property type="match status" value="1"/>
</dbReference>
<dbReference type="InterPro" id="IPR003136">
    <property type="entry name" value="Cytidylate_kin"/>
</dbReference>
<dbReference type="InterPro" id="IPR011994">
    <property type="entry name" value="Cytidylate_kinase_dom"/>
</dbReference>
<dbReference type="InterPro" id="IPR027417">
    <property type="entry name" value="P-loop_NTPase"/>
</dbReference>
<dbReference type="NCBIfam" id="TIGR00017">
    <property type="entry name" value="cmk"/>
    <property type="match status" value="1"/>
</dbReference>
<dbReference type="Pfam" id="PF02224">
    <property type="entry name" value="Cytidylate_kin"/>
    <property type="match status" value="1"/>
</dbReference>
<dbReference type="SUPFAM" id="SSF52540">
    <property type="entry name" value="P-loop containing nucleoside triphosphate hydrolases"/>
    <property type="match status" value="1"/>
</dbReference>
<protein>
    <recommendedName>
        <fullName evidence="1">Cytidylate kinase</fullName>
        <shortName evidence="1">CK</shortName>
        <ecNumber evidence="1">2.7.4.25</ecNumber>
    </recommendedName>
    <alternativeName>
        <fullName evidence="1">Cytidine monophosphate kinase</fullName>
        <shortName evidence="1">CMP kinase</shortName>
    </alternativeName>
</protein>
<name>KCY_CAUSK</name>
<comment type="catalytic activity">
    <reaction evidence="1">
        <text>CMP + ATP = CDP + ADP</text>
        <dbReference type="Rhea" id="RHEA:11600"/>
        <dbReference type="ChEBI" id="CHEBI:30616"/>
        <dbReference type="ChEBI" id="CHEBI:58069"/>
        <dbReference type="ChEBI" id="CHEBI:60377"/>
        <dbReference type="ChEBI" id="CHEBI:456216"/>
        <dbReference type="EC" id="2.7.4.25"/>
    </reaction>
</comment>
<comment type="catalytic activity">
    <reaction evidence="1">
        <text>dCMP + ATP = dCDP + ADP</text>
        <dbReference type="Rhea" id="RHEA:25094"/>
        <dbReference type="ChEBI" id="CHEBI:30616"/>
        <dbReference type="ChEBI" id="CHEBI:57566"/>
        <dbReference type="ChEBI" id="CHEBI:58593"/>
        <dbReference type="ChEBI" id="CHEBI:456216"/>
        <dbReference type="EC" id="2.7.4.25"/>
    </reaction>
</comment>
<comment type="subcellular location">
    <subcellularLocation>
        <location evidence="1">Cytoplasm</location>
    </subcellularLocation>
</comment>
<comment type="similarity">
    <text evidence="1">Belongs to the cytidylate kinase family. Type 1 subfamily.</text>
</comment>
<evidence type="ECO:0000255" key="1">
    <source>
        <dbReference type="HAMAP-Rule" id="MF_00238"/>
    </source>
</evidence>
<accession>B0T271</accession>
<gene>
    <name evidence="1" type="primary">cmk</name>
    <name type="ordered locus">Caul_0102</name>
</gene>
<organism>
    <name type="scientific">Caulobacter sp. (strain K31)</name>
    <dbReference type="NCBI Taxonomy" id="366602"/>
    <lineage>
        <taxon>Bacteria</taxon>
        <taxon>Pseudomonadati</taxon>
        <taxon>Pseudomonadota</taxon>
        <taxon>Alphaproteobacteria</taxon>
        <taxon>Caulobacterales</taxon>
        <taxon>Caulobacteraceae</taxon>
        <taxon>Caulobacter</taxon>
    </lineage>
</organism>
<reference key="1">
    <citation type="submission" date="2008-01" db="EMBL/GenBank/DDBJ databases">
        <title>Complete sequence of chromosome of Caulobacter sp. K31.</title>
        <authorList>
            <consortium name="US DOE Joint Genome Institute"/>
            <person name="Copeland A."/>
            <person name="Lucas S."/>
            <person name="Lapidus A."/>
            <person name="Barry K."/>
            <person name="Glavina del Rio T."/>
            <person name="Dalin E."/>
            <person name="Tice H."/>
            <person name="Pitluck S."/>
            <person name="Bruce D."/>
            <person name="Goodwin L."/>
            <person name="Thompson L.S."/>
            <person name="Brettin T."/>
            <person name="Detter J.C."/>
            <person name="Han C."/>
            <person name="Schmutz J."/>
            <person name="Larimer F."/>
            <person name="Land M."/>
            <person name="Hauser L."/>
            <person name="Kyrpides N."/>
            <person name="Kim E."/>
            <person name="Stephens C."/>
            <person name="Richardson P."/>
        </authorList>
    </citation>
    <scope>NUCLEOTIDE SEQUENCE [LARGE SCALE GENOMIC DNA]</scope>
    <source>
        <strain>K31</strain>
    </source>
</reference>